<comment type="subcellular location">
    <subcellularLocation>
        <location evidence="4">Membrane</location>
        <topology evidence="4">Multi-pass membrane protein</topology>
    </subcellularLocation>
</comment>
<comment type="developmental stage">
    <text evidence="3">Expression in fusion-competent cells is about 6 times higher than fusion-incompetent cells. Remains high until 8 hours of sexual development, and then slightly decreases. In the asexual development, the transcript level increases temporarily during the pre-aggregation stage (4 hours), and then returns to the basal level.</text>
</comment>
<comment type="disruption phenotype">
    <text evidence="3">Null cells have increased numbers of peripheral cells during sexual development. Indistinguishable from the wild-type cells with respect to the cAMP response.</text>
</comment>
<name>TMCC_DICDI</name>
<proteinExistence type="evidence at transcript level"/>
<dbReference type="EMBL" id="AB187034">
    <property type="protein sequence ID" value="BAD89538.1"/>
    <property type="molecule type" value="mRNA"/>
</dbReference>
<dbReference type="EMBL" id="AAFI02000132">
    <property type="protein sequence ID" value="EAL62814.1"/>
    <property type="molecule type" value="Genomic_DNA"/>
</dbReference>
<dbReference type="RefSeq" id="XP_636256.1">
    <property type="nucleotide sequence ID" value="XM_631164.1"/>
</dbReference>
<dbReference type="FunCoup" id="Q5FBC4">
    <property type="interactions" value="3"/>
</dbReference>
<dbReference type="STRING" id="44689.Q5FBC4"/>
<dbReference type="PaxDb" id="44689-DDB0231491"/>
<dbReference type="EnsemblProtists" id="EAL62814">
    <property type="protein sequence ID" value="EAL62814"/>
    <property type="gene ID" value="DDB_G0289253"/>
</dbReference>
<dbReference type="GeneID" id="8627037"/>
<dbReference type="KEGG" id="ddi:DDB_G0289253"/>
<dbReference type="dictyBase" id="DDB_G0289253">
    <property type="gene designation" value="tmcC"/>
</dbReference>
<dbReference type="VEuPathDB" id="AmoebaDB:DDB_G0289253"/>
<dbReference type="eggNOG" id="ENOG502S3MF">
    <property type="taxonomic scope" value="Eukaryota"/>
</dbReference>
<dbReference type="HOGENOM" id="CLU_253378_0_0_1"/>
<dbReference type="InParanoid" id="Q5FBC4"/>
<dbReference type="PhylomeDB" id="Q5FBC4"/>
<dbReference type="PRO" id="PR:Q5FBC4"/>
<dbReference type="Proteomes" id="UP000002195">
    <property type="component" value="Chromosome 5"/>
</dbReference>
<dbReference type="GO" id="GO:0016020">
    <property type="term" value="C:membrane"/>
    <property type="evidence" value="ECO:0007669"/>
    <property type="project" value="UniProtKB-SubCell"/>
</dbReference>
<dbReference type="GO" id="GO:0140253">
    <property type="term" value="P:cell-cell fusion"/>
    <property type="evidence" value="ECO:0000315"/>
    <property type="project" value="dictyBase"/>
</dbReference>
<dbReference type="GO" id="GO:0006396">
    <property type="term" value="P:RNA processing"/>
    <property type="evidence" value="ECO:0007669"/>
    <property type="project" value="InterPro"/>
</dbReference>
<dbReference type="Gene3D" id="1.25.40.10">
    <property type="entry name" value="Tetratricopeptide repeat domain"/>
    <property type="match status" value="1"/>
</dbReference>
<dbReference type="InterPro" id="IPR003107">
    <property type="entry name" value="HAT"/>
</dbReference>
<dbReference type="InterPro" id="IPR052994">
    <property type="entry name" value="Tiny_macrocysts_regulators"/>
</dbReference>
<dbReference type="InterPro" id="IPR011990">
    <property type="entry name" value="TPR-like_helical_dom_sf"/>
</dbReference>
<dbReference type="PANTHER" id="PTHR31600:SF2">
    <property type="entry name" value="GAMETE ENRICHED GENE 10 PROTEIN-RELATED"/>
    <property type="match status" value="1"/>
</dbReference>
<dbReference type="PANTHER" id="PTHR31600">
    <property type="entry name" value="TINY MACROCYSTS PROTEIN B-RELATED"/>
    <property type="match status" value="1"/>
</dbReference>
<dbReference type="Pfam" id="PF25474">
    <property type="entry name" value="TPR_TmcB"/>
    <property type="match status" value="1"/>
</dbReference>
<dbReference type="SMART" id="SM00386">
    <property type="entry name" value="HAT"/>
    <property type="match status" value="2"/>
</dbReference>
<gene>
    <name type="primary">tmcC</name>
    <name type="synonym">GEG10</name>
    <name type="ORF">DDB_G0289253</name>
</gene>
<keyword id="KW-0472">Membrane</keyword>
<keyword id="KW-1185">Reference proteome</keyword>
<keyword id="KW-0812">Transmembrane</keyword>
<keyword id="KW-1133">Transmembrane helix</keyword>
<evidence type="ECO:0000255" key="1"/>
<evidence type="ECO:0000256" key="2">
    <source>
        <dbReference type="SAM" id="MobiDB-lite"/>
    </source>
</evidence>
<evidence type="ECO:0000269" key="3">
    <source>
    </source>
</evidence>
<evidence type="ECO:0000305" key="4"/>
<sequence length="1400" mass="159154">MSSHKSTTKSSSSGSSMSLILGFSKSMEKGNYNFSKENKKNRSFGVLYAMIKGNTFPRILTIISLLIEFCQLSSFGFKQQYPWGGDAGYYLKRIMSPVSHPSNLVGYNGFTIFFWIVIGLLLLGFFNIWYVAYQFYRGKIANIWIIRTLRWFVSTTVAVLFIPIISLLLIGLDCDYSQGGILKTFSNDNIYCFKGANLSIAIVSIILIIVFSIVGFTSSATYYEYDTNVKSRFSKPHARFDVYILFVKLILALLNSLVDFSPWTTSIVYFILSITLVFGSIIILPYNNQRLNQVKSGFYTTVFWVSFMTLVTMGINDETTATTCYITIVGAFFAFPIGYFSNRFYYNWLSSKIDQLKLPTSSSTNDFNEITKNEKSKTGDSKEKESSSPSKVTWGKQPITLGSKRQIIFPFFQNKFVMSFFVEIMVRKLLRSSNGSNGDDGISSNSNESIEHANNLYQCGLQYFPNSDLLWMAYCNFLFTVRKDRHIGYAALEKLRRMKPSFDVRFFIYQRDKEREQIMDSDLRGPEHTGKIQDFVSYMEFKKLYYGAKRHHVKCLTYIKKFWGLLLHETVDLHRLSDLSGRIATTENKANESYERLLALNPNSVRVLRDYSQFLEEVVKDTESSYKLQKKAEAIEDIMSKSQTTDFKTIDIKNLDNSDTELDQVLKQESNAIQLAKIDADIERSGSKSGSSKSKDDSSESSSSSKGRRGKYKEFQQSNAINKLSWLMIGTTACCIIFLIVMLIVLRDLSVKHTHSYQGIISITDCASEAVSIAINLNTMQAISISAGSVAFPFEAAEAMITQYRKQNDRSLIIMKNIHDAIYWGEGDPTSYVGDNLSKLKSINGFDVFDIGSTIFSFEEFNRSSTLVDNKEMIDIYSTPSVNMTILVSPPGTNSTNYITVTQTYNAWKAGNSFYESALIANKMSVQDIKDRAVFDPDFKFIILNAPSNIPEMYMKIQQVYIKSLIDDINTTLDTMLYVWVAIFCFLIILGAVLFRPIVTKISREKIRTLVLFSLAPKDVVFKLSSKKIKMTSLDSGSERDNLFDTTDDDAADGIDNHEHLQVDERKKNDDIIDDGSIVNRSINFGSHRRPLMNSTNVLASTTTINRGTISNRLNEDHDKVPLIENSISNNNKGYGWDGKSKRNLNKKSLRSVLRRLHWSYVLAIFLLFGFITMGLWVTYSVVHDNTQSGYVLGKSCSRSLDSRIINYYIAELYTFDNDANENEALEAVLQLQSNHQSLPYLEDVRPLMEGSYGCWMLNKSNCITSDSIYYNDVSIGLDWLVDQYTKHSVSLVNTDPSLLSTSPELGWMQAIGSDVVFQGLDTATFTYFQYYLSQKDWATKVLTSVLAISCVLLLVIHLLLFRPFMNHLRIQHIHTLALLRLAPDDIRFMEVSDKVIDED</sequence>
<reference key="1">
    <citation type="journal article" date="2005" name="Mech. Dev.">
        <title>Reverse genetic analyses of gamete-enriched genes revealed a novel regulator of the cAMP signaling pathway in Dictyostelium discoideum.</title>
        <authorList>
            <person name="Muramoto T."/>
            <person name="Takeda S."/>
            <person name="Furuya Y."/>
            <person name="Urushihara H."/>
        </authorList>
    </citation>
    <scope>NUCLEOTIDE SEQUENCE [MRNA]</scope>
    <scope>DEVELOPMENTAL STAGE</scope>
    <scope>DISRUPTION PHENOTYPE</scope>
    <source>
        <strain>AX3-1</strain>
    </source>
</reference>
<reference key="2">
    <citation type="journal article" date="2005" name="Nature">
        <title>The genome of the social amoeba Dictyostelium discoideum.</title>
        <authorList>
            <person name="Eichinger L."/>
            <person name="Pachebat J.A."/>
            <person name="Gloeckner G."/>
            <person name="Rajandream M.A."/>
            <person name="Sucgang R."/>
            <person name="Berriman M."/>
            <person name="Song J."/>
            <person name="Olsen R."/>
            <person name="Szafranski K."/>
            <person name="Xu Q."/>
            <person name="Tunggal B."/>
            <person name="Kummerfeld S."/>
            <person name="Madera M."/>
            <person name="Konfortov B.A."/>
            <person name="Rivero F."/>
            <person name="Bankier A.T."/>
            <person name="Lehmann R."/>
            <person name="Hamlin N."/>
            <person name="Davies R."/>
            <person name="Gaudet P."/>
            <person name="Fey P."/>
            <person name="Pilcher K."/>
            <person name="Chen G."/>
            <person name="Saunders D."/>
            <person name="Sodergren E.J."/>
            <person name="Davis P."/>
            <person name="Kerhornou A."/>
            <person name="Nie X."/>
            <person name="Hall N."/>
            <person name="Anjard C."/>
            <person name="Hemphill L."/>
            <person name="Bason N."/>
            <person name="Farbrother P."/>
            <person name="Desany B."/>
            <person name="Just E."/>
            <person name="Morio T."/>
            <person name="Rost R."/>
            <person name="Churcher C.M."/>
            <person name="Cooper J."/>
            <person name="Haydock S."/>
            <person name="van Driessche N."/>
            <person name="Cronin A."/>
            <person name="Goodhead I."/>
            <person name="Muzny D.M."/>
            <person name="Mourier T."/>
            <person name="Pain A."/>
            <person name="Lu M."/>
            <person name="Harper D."/>
            <person name="Lindsay R."/>
            <person name="Hauser H."/>
            <person name="James K.D."/>
            <person name="Quiles M."/>
            <person name="Madan Babu M."/>
            <person name="Saito T."/>
            <person name="Buchrieser C."/>
            <person name="Wardroper A."/>
            <person name="Felder M."/>
            <person name="Thangavelu M."/>
            <person name="Johnson D."/>
            <person name="Knights A."/>
            <person name="Loulseged H."/>
            <person name="Mungall K.L."/>
            <person name="Oliver K."/>
            <person name="Price C."/>
            <person name="Quail M.A."/>
            <person name="Urushihara H."/>
            <person name="Hernandez J."/>
            <person name="Rabbinowitsch E."/>
            <person name="Steffen D."/>
            <person name="Sanders M."/>
            <person name="Ma J."/>
            <person name="Kohara Y."/>
            <person name="Sharp S."/>
            <person name="Simmonds M.N."/>
            <person name="Spiegler S."/>
            <person name="Tivey A."/>
            <person name="Sugano S."/>
            <person name="White B."/>
            <person name="Walker D."/>
            <person name="Woodward J.R."/>
            <person name="Winckler T."/>
            <person name="Tanaka Y."/>
            <person name="Shaulsky G."/>
            <person name="Schleicher M."/>
            <person name="Weinstock G.M."/>
            <person name="Rosenthal A."/>
            <person name="Cox E.C."/>
            <person name="Chisholm R.L."/>
            <person name="Gibbs R.A."/>
            <person name="Loomis W.F."/>
            <person name="Platzer M."/>
            <person name="Kay R.R."/>
            <person name="Williams J.G."/>
            <person name="Dear P.H."/>
            <person name="Noegel A.A."/>
            <person name="Barrell B.G."/>
            <person name="Kuspa A."/>
        </authorList>
    </citation>
    <scope>NUCLEOTIDE SEQUENCE [LARGE SCALE GENOMIC DNA]</scope>
    <source>
        <strain>AX4</strain>
    </source>
</reference>
<reference key="3">
    <citation type="journal article" date="2003" name="Mech. Dev.">
        <title>Construction of a gamete-enriched gene pool and RNAi-mediated functional analysis in Dictyostelium discoideum.</title>
        <authorList>
            <person name="Muramoto T."/>
            <person name="Suzuki K."/>
            <person name="Shimizu H."/>
            <person name="Kohara Y."/>
            <person name="Kohriki E."/>
            <person name="Obara S."/>
            <person name="Tanaka Y."/>
            <person name="Urushihara H."/>
        </authorList>
    </citation>
    <scope>IDENTIFICATION</scope>
</reference>
<protein>
    <recommendedName>
        <fullName>Tiny macrocysts protein C</fullName>
    </recommendedName>
    <alternativeName>
        <fullName>Gamete enriched gene 10 protein</fullName>
    </alternativeName>
    <alternativeName>
        <fullName>HAT repeat-containing protein tmcC</fullName>
    </alternativeName>
</protein>
<feature type="chain" id="PRO_0000383599" description="Tiny macrocysts protein C">
    <location>
        <begin position="1"/>
        <end position="1400"/>
    </location>
</feature>
<feature type="transmembrane region" description="Helical" evidence="1">
    <location>
        <begin position="59"/>
        <end position="79"/>
    </location>
</feature>
<feature type="transmembrane region" description="Helical" evidence="1">
    <location>
        <begin position="112"/>
        <end position="132"/>
    </location>
</feature>
<feature type="transmembrane region" description="Helical" evidence="1">
    <location>
        <begin position="152"/>
        <end position="172"/>
    </location>
</feature>
<feature type="transmembrane region" description="Helical" evidence="1">
    <location>
        <begin position="196"/>
        <end position="216"/>
    </location>
</feature>
<feature type="transmembrane region" description="Helical" evidence="1">
    <location>
        <begin position="240"/>
        <end position="260"/>
    </location>
</feature>
<feature type="transmembrane region" description="Helical" evidence="1">
    <location>
        <begin position="266"/>
        <end position="286"/>
    </location>
</feature>
<feature type="transmembrane region" description="Helical" evidence="1">
    <location>
        <begin position="296"/>
        <end position="316"/>
    </location>
</feature>
<feature type="transmembrane region" description="Helical" evidence="1">
    <location>
        <begin position="320"/>
        <end position="340"/>
    </location>
</feature>
<feature type="transmembrane region" description="Helical" evidence="1">
    <location>
        <begin position="726"/>
        <end position="746"/>
    </location>
</feature>
<feature type="transmembrane region" description="Helical" evidence="1">
    <location>
        <begin position="975"/>
        <end position="995"/>
    </location>
</feature>
<feature type="transmembrane region" description="Helical" evidence="1">
    <location>
        <begin position="1162"/>
        <end position="1182"/>
    </location>
</feature>
<feature type="transmembrane region" description="Helical" evidence="1">
    <location>
        <begin position="1342"/>
        <end position="1362"/>
    </location>
</feature>
<feature type="region of interest" description="Disordered" evidence="2">
    <location>
        <begin position="367"/>
        <end position="393"/>
    </location>
</feature>
<feature type="region of interest" description="Disordered" evidence="2">
    <location>
        <begin position="683"/>
        <end position="712"/>
    </location>
</feature>
<feature type="compositionally biased region" description="Basic and acidic residues" evidence="2">
    <location>
        <begin position="369"/>
        <end position="386"/>
    </location>
</feature>
<accession>Q5FBC4</accession>
<accession>Q54HS5</accession>
<organism>
    <name type="scientific">Dictyostelium discoideum</name>
    <name type="common">Social amoeba</name>
    <dbReference type="NCBI Taxonomy" id="44689"/>
    <lineage>
        <taxon>Eukaryota</taxon>
        <taxon>Amoebozoa</taxon>
        <taxon>Evosea</taxon>
        <taxon>Eumycetozoa</taxon>
        <taxon>Dictyostelia</taxon>
        <taxon>Dictyosteliales</taxon>
        <taxon>Dictyosteliaceae</taxon>
        <taxon>Dictyostelium</taxon>
    </lineage>
</organism>